<reference key="1">
    <citation type="journal article" date="2007" name="J. Bacteriol.">
        <title>The genome sequence of avian pathogenic Escherichia coli strain O1:K1:H7 shares strong similarities with human extraintestinal pathogenic E. coli genomes.</title>
        <authorList>
            <person name="Johnson T.J."/>
            <person name="Kariyawasam S."/>
            <person name="Wannemuehler Y."/>
            <person name="Mangiamele P."/>
            <person name="Johnson S.J."/>
            <person name="Doetkott C."/>
            <person name="Skyberg J.A."/>
            <person name="Lynne A.M."/>
            <person name="Johnson J.R."/>
            <person name="Nolan L.K."/>
        </authorList>
    </citation>
    <scope>NUCLEOTIDE SEQUENCE [LARGE SCALE GENOMIC DNA]</scope>
</reference>
<name>YCHJ_ECOK1</name>
<proteinExistence type="inferred from homology"/>
<comment type="similarity">
    <text evidence="1">Belongs to the UPF0225 family.</text>
</comment>
<feature type="chain" id="PRO_1000056723" description="UPF0225 protein YchJ">
    <location>
        <begin position="1"/>
        <end position="152"/>
    </location>
</feature>
<gene>
    <name evidence="1" type="primary">ychJ</name>
    <name type="ordered locus">Ecok1_11530</name>
    <name type="ORF">APECO1_347</name>
</gene>
<keyword id="KW-1185">Reference proteome</keyword>
<protein>
    <recommendedName>
        <fullName evidence="1">UPF0225 protein YchJ</fullName>
    </recommendedName>
</protein>
<dbReference type="EMBL" id="CP000468">
    <property type="protein sequence ID" value="ABJ00647.1"/>
    <property type="molecule type" value="Genomic_DNA"/>
</dbReference>
<dbReference type="RefSeq" id="WP_001362934.1">
    <property type="nucleotide sequence ID" value="NZ_CADILS010000001.1"/>
</dbReference>
<dbReference type="SMR" id="A1AAF7"/>
<dbReference type="KEGG" id="ecv:APECO1_347"/>
<dbReference type="HOGENOM" id="CLU_099590_0_0_6"/>
<dbReference type="Proteomes" id="UP000008216">
    <property type="component" value="Chromosome"/>
</dbReference>
<dbReference type="Gene3D" id="3.10.450.50">
    <property type="match status" value="1"/>
</dbReference>
<dbReference type="HAMAP" id="MF_00612">
    <property type="entry name" value="UPF0225"/>
    <property type="match status" value="1"/>
</dbReference>
<dbReference type="InterPro" id="IPR032710">
    <property type="entry name" value="NTF2-like_dom_sf"/>
</dbReference>
<dbReference type="InterPro" id="IPR004027">
    <property type="entry name" value="SEC_C_motif"/>
</dbReference>
<dbReference type="InterPro" id="IPR023006">
    <property type="entry name" value="UPF0225"/>
</dbReference>
<dbReference type="InterPro" id="IPR048469">
    <property type="entry name" value="YchJ-like_M"/>
</dbReference>
<dbReference type="NCBIfam" id="NF002449">
    <property type="entry name" value="PRK01617.1"/>
    <property type="match status" value="1"/>
</dbReference>
<dbReference type="NCBIfam" id="NF002486">
    <property type="entry name" value="PRK01752.1"/>
    <property type="match status" value="1"/>
</dbReference>
<dbReference type="PANTHER" id="PTHR33747:SF1">
    <property type="entry name" value="ADENYLATE CYCLASE-ASSOCIATED CAP C-TERMINAL DOMAIN-CONTAINING PROTEIN"/>
    <property type="match status" value="1"/>
</dbReference>
<dbReference type="PANTHER" id="PTHR33747">
    <property type="entry name" value="UPF0225 PROTEIN SCO1677"/>
    <property type="match status" value="1"/>
</dbReference>
<dbReference type="Pfam" id="PF02810">
    <property type="entry name" value="SEC-C"/>
    <property type="match status" value="2"/>
</dbReference>
<dbReference type="Pfam" id="PF17775">
    <property type="entry name" value="YchJ_M-like"/>
    <property type="match status" value="1"/>
</dbReference>
<dbReference type="SUPFAM" id="SSF54427">
    <property type="entry name" value="NTF2-like"/>
    <property type="match status" value="1"/>
</dbReference>
<dbReference type="SUPFAM" id="SSF103642">
    <property type="entry name" value="Sec-C motif"/>
    <property type="match status" value="1"/>
</dbReference>
<organism>
    <name type="scientific">Escherichia coli O1:K1 / APEC</name>
    <dbReference type="NCBI Taxonomy" id="405955"/>
    <lineage>
        <taxon>Bacteria</taxon>
        <taxon>Pseudomonadati</taxon>
        <taxon>Pseudomonadota</taxon>
        <taxon>Gammaproteobacteria</taxon>
        <taxon>Enterobacterales</taxon>
        <taxon>Enterobacteriaceae</taxon>
        <taxon>Escherichia</taxon>
    </lineage>
</organism>
<evidence type="ECO:0000255" key="1">
    <source>
        <dbReference type="HAMAP-Rule" id="MF_00612"/>
    </source>
</evidence>
<accession>A1AAF7</accession>
<sequence>MSQLCPCGSAVEYSLCCHPYVSGEKVAPDPEHLMRSRYCAFVMQDADYLIKTWHPSCGAAALRAELIAGFAHTEWLGLTVFEHCWQDGGNIGFVSFVARFTEGGKTGAIIERSRFLKENGQWYYIDGTRPQFGRNDPCPCGSGKKFKKCCGQ</sequence>